<feature type="chain" id="PRO_0000254233" description="ATP synthase subunit beta 1">
    <location>
        <begin position="1"/>
        <end position="464"/>
    </location>
</feature>
<feature type="binding site" evidence="1">
    <location>
        <begin position="153"/>
        <end position="160"/>
    </location>
    <ligand>
        <name>ATP</name>
        <dbReference type="ChEBI" id="CHEBI:30616"/>
    </ligand>
</feature>
<dbReference type="EC" id="7.1.2.2" evidence="1"/>
<dbReference type="EMBL" id="CP000124">
    <property type="protein sequence ID" value="ABA48562.1"/>
    <property type="molecule type" value="Genomic_DNA"/>
</dbReference>
<dbReference type="SMR" id="Q3JXV8"/>
<dbReference type="EnsemblBacteria" id="ABA48562">
    <property type="protein sequence ID" value="ABA48562"/>
    <property type="gene ID" value="BURPS1710b_0179"/>
</dbReference>
<dbReference type="KEGG" id="bpm:BURPS1710b_0179"/>
<dbReference type="HOGENOM" id="CLU_022398_0_2_4"/>
<dbReference type="Proteomes" id="UP000002700">
    <property type="component" value="Chromosome I"/>
</dbReference>
<dbReference type="GO" id="GO:0005886">
    <property type="term" value="C:plasma membrane"/>
    <property type="evidence" value="ECO:0007669"/>
    <property type="project" value="UniProtKB-SubCell"/>
</dbReference>
<dbReference type="GO" id="GO:0045259">
    <property type="term" value="C:proton-transporting ATP synthase complex"/>
    <property type="evidence" value="ECO:0007669"/>
    <property type="project" value="UniProtKB-KW"/>
</dbReference>
<dbReference type="GO" id="GO:0005524">
    <property type="term" value="F:ATP binding"/>
    <property type="evidence" value="ECO:0007669"/>
    <property type="project" value="UniProtKB-UniRule"/>
</dbReference>
<dbReference type="GO" id="GO:0016887">
    <property type="term" value="F:ATP hydrolysis activity"/>
    <property type="evidence" value="ECO:0007669"/>
    <property type="project" value="InterPro"/>
</dbReference>
<dbReference type="GO" id="GO:0046933">
    <property type="term" value="F:proton-transporting ATP synthase activity, rotational mechanism"/>
    <property type="evidence" value="ECO:0007669"/>
    <property type="project" value="UniProtKB-UniRule"/>
</dbReference>
<dbReference type="CDD" id="cd18110">
    <property type="entry name" value="ATP-synt_F1_beta_C"/>
    <property type="match status" value="1"/>
</dbReference>
<dbReference type="CDD" id="cd18115">
    <property type="entry name" value="ATP-synt_F1_beta_N"/>
    <property type="match status" value="1"/>
</dbReference>
<dbReference type="CDD" id="cd01133">
    <property type="entry name" value="F1-ATPase_beta_CD"/>
    <property type="match status" value="1"/>
</dbReference>
<dbReference type="FunFam" id="1.10.1140.10:FF:000001">
    <property type="entry name" value="ATP synthase subunit beta"/>
    <property type="match status" value="1"/>
</dbReference>
<dbReference type="FunFam" id="3.40.50.300:FF:000004">
    <property type="entry name" value="ATP synthase subunit beta"/>
    <property type="match status" value="1"/>
</dbReference>
<dbReference type="Gene3D" id="2.40.10.170">
    <property type="match status" value="1"/>
</dbReference>
<dbReference type="Gene3D" id="1.10.1140.10">
    <property type="entry name" value="Bovine Mitochondrial F1-atpase, Atp Synthase Beta Chain, Chain D, domain 3"/>
    <property type="match status" value="1"/>
</dbReference>
<dbReference type="Gene3D" id="3.40.50.300">
    <property type="entry name" value="P-loop containing nucleotide triphosphate hydrolases"/>
    <property type="match status" value="1"/>
</dbReference>
<dbReference type="HAMAP" id="MF_01347">
    <property type="entry name" value="ATP_synth_beta_bact"/>
    <property type="match status" value="1"/>
</dbReference>
<dbReference type="InterPro" id="IPR003593">
    <property type="entry name" value="AAA+_ATPase"/>
</dbReference>
<dbReference type="InterPro" id="IPR055190">
    <property type="entry name" value="ATP-synt_VA_C"/>
</dbReference>
<dbReference type="InterPro" id="IPR005722">
    <property type="entry name" value="ATP_synth_F1_bsu"/>
</dbReference>
<dbReference type="InterPro" id="IPR020003">
    <property type="entry name" value="ATPase_a/bsu_AS"/>
</dbReference>
<dbReference type="InterPro" id="IPR050053">
    <property type="entry name" value="ATPase_alpha/beta_chains"/>
</dbReference>
<dbReference type="InterPro" id="IPR004100">
    <property type="entry name" value="ATPase_F1/V1/A1_a/bsu_N"/>
</dbReference>
<dbReference type="InterPro" id="IPR036121">
    <property type="entry name" value="ATPase_F1/V1/A1_a/bsu_N_sf"/>
</dbReference>
<dbReference type="InterPro" id="IPR000194">
    <property type="entry name" value="ATPase_F1/V1/A1_a/bsu_nucl-bd"/>
</dbReference>
<dbReference type="InterPro" id="IPR024034">
    <property type="entry name" value="ATPase_F1/V1_b/a_C"/>
</dbReference>
<dbReference type="InterPro" id="IPR027417">
    <property type="entry name" value="P-loop_NTPase"/>
</dbReference>
<dbReference type="NCBIfam" id="TIGR01039">
    <property type="entry name" value="atpD"/>
    <property type="match status" value="1"/>
</dbReference>
<dbReference type="PANTHER" id="PTHR15184">
    <property type="entry name" value="ATP SYNTHASE"/>
    <property type="match status" value="1"/>
</dbReference>
<dbReference type="PANTHER" id="PTHR15184:SF71">
    <property type="entry name" value="ATP SYNTHASE SUBUNIT BETA, MITOCHONDRIAL"/>
    <property type="match status" value="1"/>
</dbReference>
<dbReference type="Pfam" id="PF00006">
    <property type="entry name" value="ATP-synt_ab"/>
    <property type="match status" value="1"/>
</dbReference>
<dbReference type="Pfam" id="PF02874">
    <property type="entry name" value="ATP-synt_ab_N"/>
    <property type="match status" value="1"/>
</dbReference>
<dbReference type="Pfam" id="PF22919">
    <property type="entry name" value="ATP-synt_VA_C"/>
    <property type="match status" value="1"/>
</dbReference>
<dbReference type="SMART" id="SM00382">
    <property type="entry name" value="AAA"/>
    <property type="match status" value="1"/>
</dbReference>
<dbReference type="SUPFAM" id="SSF47917">
    <property type="entry name" value="C-terminal domain of alpha and beta subunits of F1 ATP synthase"/>
    <property type="match status" value="1"/>
</dbReference>
<dbReference type="SUPFAM" id="SSF50615">
    <property type="entry name" value="N-terminal domain of alpha and beta subunits of F1 ATP synthase"/>
    <property type="match status" value="1"/>
</dbReference>
<dbReference type="SUPFAM" id="SSF52540">
    <property type="entry name" value="P-loop containing nucleoside triphosphate hydrolases"/>
    <property type="match status" value="1"/>
</dbReference>
<dbReference type="PROSITE" id="PS00152">
    <property type="entry name" value="ATPASE_ALPHA_BETA"/>
    <property type="match status" value="1"/>
</dbReference>
<proteinExistence type="inferred from homology"/>
<keyword id="KW-0066">ATP synthesis</keyword>
<keyword id="KW-0067">ATP-binding</keyword>
<keyword id="KW-0997">Cell inner membrane</keyword>
<keyword id="KW-1003">Cell membrane</keyword>
<keyword id="KW-0139">CF(1)</keyword>
<keyword id="KW-0375">Hydrogen ion transport</keyword>
<keyword id="KW-0406">Ion transport</keyword>
<keyword id="KW-0472">Membrane</keyword>
<keyword id="KW-0547">Nucleotide-binding</keyword>
<keyword id="KW-1278">Translocase</keyword>
<keyword id="KW-0813">Transport</keyword>
<evidence type="ECO:0000255" key="1">
    <source>
        <dbReference type="HAMAP-Rule" id="MF_01347"/>
    </source>
</evidence>
<organism>
    <name type="scientific">Burkholderia pseudomallei (strain 1710b)</name>
    <dbReference type="NCBI Taxonomy" id="320372"/>
    <lineage>
        <taxon>Bacteria</taxon>
        <taxon>Pseudomonadati</taxon>
        <taxon>Pseudomonadota</taxon>
        <taxon>Betaproteobacteria</taxon>
        <taxon>Burkholderiales</taxon>
        <taxon>Burkholderiaceae</taxon>
        <taxon>Burkholderia</taxon>
        <taxon>pseudomallei group</taxon>
    </lineage>
</organism>
<gene>
    <name evidence="1" type="primary">atpD1</name>
    <name type="ordered locus">BURPS1710b_0179</name>
</gene>
<name>ATPB1_BURP1</name>
<protein>
    <recommendedName>
        <fullName evidence="1">ATP synthase subunit beta 1</fullName>
        <ecNumber evidence="1">7.1.2.2</ecNumber>
    </recommendedName>
    <alternativeName>
        <fullName evidence="1">ATP synthase F1 sector subunit beta 1</fullName>
    </alternativeName>
    <alternativeName>
        <fullName evidence="1">F-ATPase subunit beta 1</fullName>
    </alternativeName>
</protein>
<accession>Q3JXV8</accession>
<sequence length="464" mass="50623">MSTAALVEGKIVQCIGAVIDVEFPRESMPKIYDALILEGSELTLEVQQQLGDGVVRTICLGASDGLRRGVVVKNTGNPISVPVGKPTLGRIMDVLGRPIDEAGPIESENKRSIHQKAPAFDELSPSTELLETGIKVIDLICPFAKGGKVGLFGGAGVGKTVNMMELINNIAKEHGGYSVFAGVGERTREGNDFYHEMKDSNVLDKVALVYGQMNEPPGNRLRVALTGLTMAEHFRDEGLDVLFFVDNIYRFTLAGTEVSALLGRMPSAVGYQPTLAEEMGKLQERITSTKKGSITSVQAVYVPADDLTDPSPATTFGHLDATVVLSRDIASLGIYPAVDPLDSTSRQIDPNVIGEEHYSITRRVQQTLQRYKELRDIIAILGMDELSPEDKLSVARARKIQRFLSQPFHVAEVFTGSPGKYVPLKETIRGFKMIVDGECDHLPEQAFYMVGTIDEAFEKAKKIQ</sequence>
<reference key="1">
    <citation type="journal article" date="2010" name="Genome Biol. Evol.">
        <title>Continuing evolution of Burkholderia mallei through genome reduction and large-scale rearrangements.</title>
        <authorList>
            <person name="Losada L."/>
            <person name="Ronning C.M."/>
            <person name="DeShazer D."/>
            <person name="Woods D."/>
            <person name="Fedorova N."/>
            <person name="Kim H.S."/>
            <person name="Shabalina S.A."/>
            <person name="Pearson T.R."/>
            <person name="Brinkac L."/>
            <person name="Tan P."/>
            <person name="Nandi T."/>
            <person name="Crabtree J."/>
            <person name="Badger J."/>
            <person name="Beckstrom-Sternberg S."/>
            <person name="Saqib M."/>
            <person name="Schutzer S.E."/>
            <person name="Keim P."/>
            <person name="Nierman W.C."/>
        </authorList>
    </citation>
    <scope>NUCLEOTIDE SEQUENCE [LARGE SCALE GENOMIC DNA]</scope>
    <source>
        <strain>1710b</strain>
    </source>
</reference>
<comment type="function">
    <text evidence="1">Produces ATP from ADP in the presence of a proton gradient across the membrane. The catalytic sites are hosted primarily by the beta subunits.</text>
</comment>
<comment type="catalytic activity">
    <reaction evidence="1">
        <text>ATP + H2O + 4 H(+)(in) = ADP + phosphate + 5 H(+)(out)</text>
        <dbReference type="Rhea" id="RHEA:57720"/>
        <dbReference type="ChEBI" id="CHEBI:15377"/>
        <dbReference type="ChEBI" id="CHEBI:15378"/>
        <dbReference type="ChEBI" id="CHEBI:30616"/>
        <dbReference type="ChEBI" id="CHEBI:43474"/>
        <dbReference type="ChEBI" id="CHEBI:456216"/>
        <dbReference type="EC" id="7.1.2.2"/>
    </reaction>
</comment>
<comment type="subunit">
    <text evidence="1">F-type ATPases have 2 components, CF(1) - the catalytic core - and CF(0) - the membrane proton channel. CF(1) has five subunits: alpha(3), beta(3), gamma(1), delta(1), epsilon(1). CF(0) has three main subunits: a(1), b(2) and c(9-12). The alpha and beta chains form an alternating ring which encloses part of the gamma chain. CF(1) is attached to CF(0) by a central stalk formed by the gamma and epsilon chains, while a peripheral stalk is formed by the delta and b chains.</text>
</comment>
<comment type="subcellular location">
    <subcellularLocation>
        <location evidence="1">Cell inner membrane</location>
        <topology evidence="1">Peripheral membrane protein</topology>
    </subcellularLocation>
</comment>
<comment type="similarity">
    <text evidence="1">Belongs to the ATPase alpha/beta chains family.</text>
</comment>